<sequence length="80" mass="8906">MNKSINNLQDIFLNNARKERIPVTIFLVNGVQLKGIVKGFDSFTVVLDSDGKQQLVYKHAISTVSPAKPILFNSAQVFDN</sequence>
<proteinExistence type="inferred from homology"/>
<gene>
    <name evidence="1" type="primary">hfq</name>
    <name type="ordered locus">CPR_1174</name>
</gene>
<evidence type="ECO:0000255" key="1">
    <source>
        <dbReference type="HAMAP-Rule" id="MF_00436"/>
    </source>
</evidence>
<evidence type="ECO:0000255" key="2">
    <source>
        <dbReference type="PROSITE-ProRule" id="PRU01346"/>
    </source>
</evidence>
<comment type="function">
    <text evidence="1">RNA chaperone that binds small regulatory RNA (sRNAs) and mRNAs to facilitate mRNA translational regulation in response to envelope stress, environmental stress and changes in metabolite concentrations. Also binds with high specificity to tRNAs.</text>
</comment>
<comment type="subunit">
    <text evidence="1">Homohexamer.</text>
</comment>
<comment type="similarity">
    <text evidence="1">Belongs to the Hfq family.</text>
</comment>
<reference key="1">
    <citation type="journal article" date="2006" name="Genome Res.">
        <title>Skewed genomic variability in strains of the toxigenic bacterial pathogen, Clostridium perfringens.</title>
        <authorList>
            <person name="Myers G.S.A."/>
            <person name="Rasko D.A."/>
            <person name="Cheung J.K."/>
            <person name="Ravel J."/>
            <person name="Seshadri R."/>
            <person name="DeBoy R.T."/>
            <person name="Ren Q."/>
            <person name="Varga J."/>
            <person name="Awad M.M."/>
            <person name="Brinkac L.M."/>
            <person name="Daugherty S.C."/>
            <person name="Haft D.H."/>
            <person name="Dodson R.J."/>
            <person name="Madupu R."/>
            <person name="Nelson W.C."/>
            <person name="Rosovitz M.J."/>
            <person name="Sullivan S.A."/>
            <person name="Khouri H."/>
            <person name="Dimitrov G.I."/>
            <person name="Watkins K.L."/>
            <person name="Mulligan S."/>
            <person name="Benton J."/>
            <person name="Radune D."/>
            <person name="Fisher D.J."/>
            <person name="Atkins H.S."/>
            <person name="Hiscox T."/>
            <person name="Jost B.H."/>
            <person name="Billington S.J."/>
            <person name="Songer J.G."/>
            <person name="McClane B.A."/>
            <person name="Titball R.W."/>
            <person name="Rood J.I."/>
            <person name="Melville S.B."/>
            <person name="Paulsen I.T."/>
        </authorList>
    </citation>
    <scope>NUCLEOTIDE SEQUENCE [LARGE SCALE GENOMIC DNA]</scope>
    <source>
        <strain>SM101 / Type A</strain>
    </source>
</reference>
<dbReference type="EMBL" id="CP000312">
    <property type="protein sequence ID" value="ABG85614.1"/>
    <property type="molecule type" value="Genomic_DNA"/>
</dbReference>
<dbReference type="RefSeq" id="WP_003452525.1">
    <property type="nucleotide sequence ID" value="NC_008262.1"/>
</dbReference>
<dbReference type="SMR" id="Q0STR1"/>
<dbReference type="KEGG" id="cpr:CPR_1174"/>
<dbReference type="Proteomes" id="UP000001824">
    <property type="component" value="Chromosome"/>
</dbReference>
<dbReference type="GO" id="GO:0005829">
    <property type="term" value="C:cytosol"/>
    <property type="evidence" value="ECO:0007669"/>
    <property type="project" value="TreeGrafter"/>
</dbReference>
<dbReference type="GO" id="GO:0003723">
    <property type="term" value="F:RNA binding"/>
    <property type="evidence" value="ECO:0007669"/>
    <property type="project" value="UniProtKB-UniRule"/>
</dbReference>
<dbReference type="GO" id="GO:0006355">
    <property type="term" value="P:regulation of DNA-templated transcription"/>
    <property type="evidence" value="ECO:0007669"/>
    <property type="project" value="InterPro"/>
</dbReference>
<dbReference type="GO" id="GO:0043487">
    <property type="term" value="P:regulation of RNA stability"/>
    <property type="evidence" value="ECO:0007669"/>
    <property type="project" value="TreeGrafter"/>
</dbReference>
<dbReference type="GO" id="GO:0045974">
    <property type="term" value="P:regulation of translation, ncRNA-mediated"/>
    <property type="evidence" value="ECO:0007669"/>
    <property type="project" value="TreeGrafter"/>
</dbReference>
<dbReference type="CDD" id="cd01716">
    <property type="entry name" value="Hfq"/>
    <property type="match status" value="1"/>
</dbReference>
<dbReference type="Gene3D" id="2.30.30.100">
    <property type="match status" value="1"/>
</dbReference>
<dbReference type="HAMAP" id="MF_00436">
    <property type="entry name" value="Hfq"/>
    <property type="match status" value="1"/>
</dbReference>
<dbReference type="InterPro" id="IPR005001">
    <property type="entry name" value="Hfq"/>
</dbReference>
<dbReference type="InterPro" id="IPR010920">
    <property type="entry name" value="LSM_dom_sf"/>
</dbReference>
<dbReference type="InterPro" id="IPR047575">
    <property type="entry name" value="Sm"/>
</dbReference>
<dbReference type="NCBIfam" id="TIGR02383">
    <property type="entry name" value="Hfq"/>
    <property type="match status" value="1"/>
</dbReference>
<dbReference type="NCBIfam" id="NF001602">
    <property type="entry name" value="PRK00395.1"/>
    <property type="match status" value="1"/>
</dbReference>
<dbReference type="PANTHER" id="PTHR34772">
    <property type="entry name" value="RNA-BINDING PROTEIN HFQ"/>
    <property type="match status" value="1"/>
</dbReference>
<dbReference type="PANTHER" id="PTHR34772:SF1">
    <property type="entry name" value="RNA-BINDING PROTEIN HFQ"/>
    <property type="match status" value="1"/>
</dbReference>
<dbReference type="Pfam" id="PF17209">
    <property type="entry name" value="Hfq"/>
    <property type="match status" value="1"/>
</dbReference>
<dbReference type="SUPFAM" id="SSF50182">
    <property type="entry name" value="Sm-like ribonucleoproteins"/>
    <property type="match status" value="1"/>
</dbReference>
<dbReference type="PROSITE" id="PS52002">
    <property type="entry name" value="SM"/>
    <property type="match status" value="1"/>
</dbReference>
<feature type="chain" id="PRO_0000265150" description="RNA-binding protein Hfq">
    <location>
        <begin position="1"/>
        <end position="80"/>
    </location>
</feature>
<feature type="domain" description="Sm" evidence="2">
    <location>
        <begin position="10"/>
        <end position="70"/>
    </location>
</feature>
<organism>
    <name type="scientific">Clostridium perfringens (strain SM101 / Type A)</name>
    <dbReference type="NCBI Taxonomy" id="289380"/>
    <lineage>
        <taxon>Bacteria</taxon>
        <taxon>Bacillati</taxon>
        <taxon>Bacillota</taxon>
        <taxon>Clostridia</taxon>
        <taxon>Eubacteriales</taxon>
        <taxon>Clostridiaceae</taxon>
        <taxon>Clostridium</taxon>
    </lineage>
</organism>
<name>HFQ_CLOPS</name>
<keyword id="KW-0694">RNA-binding</keyword>
<keyword id="KW-0346">Stress response</keyword>
<protein>
    <recommendedName>
        <fullName evidence="1">RNA-binding protein Hfq</fullName>
    </recommendedName>
</protein>
<accession>Q0STR1</accession>